<organism>
    <name type="scientific">Canis lupus familiaris</name>
    <name type="common">Dog</name>
    <name type="synonym">Canis familiaris</name>
    <dbReference type="NCBI Taxonomy" id="9615"/>
    <lineage>
        <taxon>Eukaryota</taxon>
        <taxon>Metazoa</taxon>
        <taxon>Chordata</taxon>
        <taxon>Craniata</taxon>
        <taxon>Vertebrata</taxon>
        <taxon>Euteleostomi</taxon>
        <taxon>Mammalia</taxon>
        <taxon>Eutheria</taxon>
        <taxon>Laurasiatheria</taxon>
        <taxon>Carnivora</taxon>
        <taxon>Caniformia</taxon>
        <taxon>Canidae</taxon>
        <taxon>Canis</taxon>
    </lineage>
</organism>
<feature type="signal peptide" evidence="4">
    <location>
        <begin position="1"/>
        <end position="18"/>
    </location>
</feature>
<feature type="chain" id="PRO_0000238662" description="Arylsulfatase G">
    <location>
        <begin position="19"/>
        <end position="535"/>
    </location>
</feature>
<feature type="active site" description="Nucleophile" evidence="1">
    <location>
        <position position="84"/>
    </location>
</feature>
<feature type="active site" evidence="1">
    <location>
        <position position="139"/>
    </location>
</feature>
<feature type="binding site" evidence="1">
    <location>
        <position position="44"/>
    </location>
    <ligand>
        <name>Ca(2+)</name>
        <dbReference type="ChEBI" id="CHEBI:29108"/>
    </ligand>
</feature>
<feature type="binding site" evidence="1">
    <location>
        <position position="45"/>
    </location>
    <ligand>
        <name>Ca(2+)</name>
        <dbReference type="ChEBI" id="CHEBI:29108"/>
    </ligand>
</feature>
<feature type="binding site" description="via 3-oxoalanine" evidence="1">
    <location>
        <position position="84"/>
    </location>
    <ligand>
        <name>Ca(2+)</name>
        <dbReference type="ChEBI" id="CHEBI:29108"/>
    </ligand>
</feature>
<feature type="binding site" evidence="1">
    <location>
        <position position="137"/>
    </location>
    <ligand>
        <name>substrate</name>
    </ligand>
</feature>
<feature type="binding site" evidence="1">
    <location>
        <position position="162"/>
    </location>
    <ligand>
        <name>substrate</name>
    </ligand>
</feature>
<feature type="binding site" evidence="1">
    <location>
        <position position="251"/>
    </location>
    <ligand>
        <name>substrate</name>
    </ligand>
</feature>
<feature type="binding site" evidence="1">
    <location>
        <position position="302"/>
    </location>
    <ligand>
        <name>Ca(2+)</name>
        <dbReference type="ChEBI" id="CHEBI:29108"/>
    </ligand>
</feature>
<feature type="binding site" evidence="1">
    <location>
        <position position="303"/>
    </location>
    <ligand>
        <name>Ca(2+)</name>
        <dbReference type="ChEBI" id="CHEBI:29108"/>
    </ligand>
</feature>
<feature type="modified residue" description="3-oxoalanine (Cys)" evidence="1">
    <location>
        <position position="84"/>
    </location>
</feature>
<feature type="glycosylation site" description="N-linked (GlcNAc...) asparagine" evidence="2">
    <location>
        <position position="117"/>
    </location>
</feature>
<feature type="glycosylation site" description="N-linked (GlcNAc...) asparagine" evidence="4">
    <location>
        <position position="215"/>
    </location>
</feature>
<feature type="glycosylation site" description="N-linked (GlcNAc...) asparagine" evidence="4">
    <location>
        <position position="356"/>
    </location>
</feature>
<feature type="glycosylation site" description="N-linked (GlcNAc...) asparagine" evidence="2">
    <location>
        <position position="497"/>
    </location>
</feature>
<evidence type="ECO:0000250" key="1">
    <source>
        <dbReference type="UniProtKB" id="P15289"/>
    </source>
</evidence>
<evidence type="ECO:0000250" key="2">
    <source>
        <dbReference type="UniProtKB" id="Q3TYD4"/>
    </source>
</evidence>
<evidence type="ECO:0000250" key="3">
    <source>
        <dbReference type="UniProtKB" id="Q96EG1"/>
    </source>
</evidence>
<evidence type="ECO:0000255" key="4"/>
<evidence type="ECO:0000305" key="5"/>
<proteinExistence type="evidence at transcript level"/>
<dbReference type="EC" id="3.1.6.1" evidence="3"/>
<dbReference type="EC" id="3.1.6.15" evidence="3"/>
<dbReference type="EMBL" id="AAEX02034846">
    <property type="status" value="NOT_ANNOTATED_CDS"/>
    <property type="molecule type" value="Genomic_DNA"/>
</dbReference>
<dbReference type="EMBL" id="BN000758">
    <property type="protein sequence ID" value="CAI85004.1"/>
    <property type="molecule type" value="mRNA"/>
</dbReference>
<dbReference type="RefSeq" id="NP_001041563.1">
    <property type="nucleotide sequence ID" value="NM_001048098.1"/>
</dbReference>
<dbReference type="SMR" id="Q32KH9"/>
<dbReference type="FunCoup" id="Q32KH9">
    <property type="interactions" value="69"/>
</dbReference>
<dbReference type="STRING" id="9615.ENSCAFP00000016319"/>
<dbReference type="GlyCosmos" id="Q32KH9">
    <property type="glycosylation" value="4 sites, No reported glycans"/>
</dbReference>
<dbReference type="PaxDb" id="9612-ENSCAFP00000016319"/>
<dbReference type="Ensembl" id="ENSCAFT00000100609.1">
    <property type="protein sequence ID" value="ENSCAFP00000067218.1"/>
    <property type="gene ID" value="ENSCAFG00000011070.5"/>
</dbReference>
<dbReference type="GeneID" id="480460"/>
<dbReference type="KEGG" id="cfa:480460"/>
<dbReference type="CTD" id="22901"/>
<dbReference type="VGNC" id="VGNC:51920">
    <property type="gene designation" value="ARSG"/>
</dbReference>
<dbReference type="eggNOG" id="KOG3867">
    <property type="taxonomic scope" value="Eukaryota"/>
</dbReference>
<dbReference type="HOGENOM" id="CLU_006332_13_6_1"/>
<dbReference type="InParanoid" id="Q32KH9"/>
<dbReference type="OMA" id="HVACRCQ"/>
<dbReference type="OrthoDB" id="103349at2759"/>
<dbReference type="TreeFam" id="TF314186"/>
<dbReference type="Proteomes" id="UP000002254">
    <property type="component" value="Chromosome 9"/>
</dbReference>
<dbReference type="Proteomes" id="UP000694429">
    <property type="component" value="Unplaced"/>
</dbReference>
<dbReference type="Proteomes" id="UP000694542">
    <property type="component" value="Unplaced"/>
</dbReference>
<dbReference type="Proteomes" id="UP000805418">
    <property type="component" value="Unplaced"/>
</dbReference>
<dbReference type="Bgee" id="ENSCAFG00000011070">
    <property type="expression patterns" value="Expressed in granulocyte and 49 other cell types or tissues"/>
</dbReference>
<dbReference type="GO" id="GO:0005764">
    <property type="term" value="C:lysosome"/>
    <property type="evidence" value="ECO:0000250"/>
    <property type="project" value="UniProtKB"/>
</dbReference>
<dbReference type="GO" id="GO:0004065">
    <property type="term" value="F:arylsulfatase activity"/>
    <property type="evidence" value="ECO:0000250"/>
    <property type="project" value="UniProtKB"/>
</dbReference>
<dbReference type="GO" id="GO:0046872">
    <property type="term" value="F:metal ion binding"/>
    <property type="evidence" value="ECO:0007669"/>
    <property type="project" value="UniProtKB-KW"/>
</dbReference>
<dbReference type="CDD" id="cd16161">
    <property type="entry name" value="ARSG"/>
    <property type="match status" value="1"/>
</dbReference>
<dbReference type="FunFam" id="3.30.1120.10:FF:000006">
    <property type="entry name" value="Arylsulfatase G"/>
    <property type="match status" value="1"/>
</dbReference>
<dbReference type="FunFam" id="3.40.720.10:FF:000031">
    <property type="entry name" value="arylsulfatase G isoform X1"/>
    <property type="match status" value="1"/>
</dbReference>
<dbReference type="Gene3D" id="3.30.1120.10">
    <property type="match status" value="1"/>
</dbReference>
<dbReference type="Gene3D" id="3.40.720.10">
    <property type="entry name" value="Alkaline Phosphatase, subunit A"/>
    <property type="match status" value="1"/>
</dbReference>
<dbReference type="InterPro" id="IPR017850">
    <property type="entry name" value="Alkaline_phosphatase_core_sf"/>
</dbReference>
<dbReference type="InterPro" id="IPR050738">
    <property type="entry name" value="Sulfatase"/>
</dbReference>
<dbReference type="InterPro" id="IPR024607">
    <property type="entry name" value="Sulfatase_CS"/>
</dbReference>
<dbReference type="InterPro" id="IPR000917">
    <property type="entry name" value="Sulfatase_N"/>
</dbReference>
<dbReference type="PANTHER" id="PTHR42693">
    <property type="entry name" value="ARYLSULFATASE FAMILY MEMBER"/>
    <property type="match status" value="1"/>
</dbReference>
<dbReference type="PANTHER" id="PTHR42693:SF42">
    <property type="entry name" value="ARYLSULFATASE G"/>
    <property type="match status" value="1"/>
</dbReference>
<dbReference type="Pfam" id="PF00884">
    <property type="entry name" value="Sulfatase"/>
    <property type="match status" value="1"/>
</dbReference>
<dbReference type="Pfam" id="PF14707">
    <property type="entry name" value="Sulfatase_C"/>
    <property type="match status" value="1"/>
</dbReference>
<dbReference type="SUPFAM" id="SSF53649">
    <property type="entry name" value="Alkaline phosphatase-like"/>
    <property type="match status" value="1"/>
</dbReference>
<dbReference type="PROSITE" id="PS00523">
    <property type="entry name" value="SULFATASE_1"/>
    <property type="match status" value="1"/>
</dbReference>
<dbReference type="PROSITE" id="PS00149">
    <property type="entry name" value="SULFATASE_2"/>
    <property type="match status" value="1"/>
</dbReference>
<gene>
    <name type="primary">ARSG</name>
</gene>
<name>ARSG_CANLF</name>
<sequence length="535" mass="58250">MGWLFLKVLFLGVTFLGCLYPLVDFCPSGETRGQKPNFVIILADDMGWGDLGANWAETKDTANLDKMAAEGMRFVDFHAAASTCSPSRASLLTGRLGLRNGVTHNFAVTSVGGLPLNETTLAEVLQQAGYVTGMIGKWHLGHHGPYHPNFRGFDYYFGIPYSHDMGCTDTPGYNHPPCPACPRGDRPSRSLERDCYTDVALPLYENLNIVEQPVNLSSLAHKYAEKAIQFIQHASASGRPFLLYMGLAHMHVPISRTQLSAVLRGRRPYGAGLREMDSLVGQIKDKVDRTAKENTFLWFTGDNGPWAQKCELAGSVGPFTGLWQTHQGGSPAKQTTWEGGHRVPALAYWPGRVPVNVTSTALLSVLDIFPTVVALAGASLPQDRHFDGLDASEVLFGWSQTGHRVLFHPNSGAAGEFGALQTVRLGSYKAFYVSGGAKACDGDVGREQHHDPPLIFNLEDDVAEAVPLDRGSAEYQGVLPKVREILADVLLDIAGDNTSRADYTRHPSVTPCCNPHHVACRCQATGWTDFPTGRC</sequence>
<accession>Q32KH9</accession>
<keyword id="KW-0106">Calcium</keyword>
<keyword id="KW-1015">Disulfide bond</keyword>
<keyword id="KW-0325">Glycoprotein</keyword>
<keyword id="KW-0378">Hydrolase</keyword>
<keyword id="KW-0458">Lysosome</keyword>
<keyword id="KW-0479">Metal-binding</keyword>
<keyword id="KW-1185">Reference proteome</keyword>
<keyword id="KW-0732">Signal</keyword>
<comment type="function">
    <text evidence="3">Displays arylsulfatase activity with pseudosubstrates at acidic pH, such as p-nitrocatechol sulfate (By similarity). Catalyzes the hydrolysis of the 3-sulfate groups of the N-sulfo-D-glucosamine 3-O-sulfate units of heparin (By similarity).</text>
</comment>
<comment type="catalytic activity">
    <reaction evidence="3">
        <text>an aryl sulfate + H2O = a phenol + sulfate + H(+)</text>
        <dbReference type="Rhea" id="RHEA:17261"/>
        <dbReference type="ChEBI" id="CHEBI:15377"/>
        <dbReference type="ChEBI" id="CHEBI:15378"/>
        <dbReference type="ChEBI" id="CHEBI:16189"/>
        <dbReference type="ChEBI" id="CHEBI:33853"/>
        <dbReference type="ChEBI" id="CHEBI:140317"/>
        <dbReference type="EC" id="3.1.6.1"/>
    </reaction>
</comment>
<comment type="catalytic activity">
    <reaction evidence="3">
        <text>Hydrolysis of the 3-sulfate groups of the N-sulfo-D-glucosamine 3-O-sulfate units of heparin.</text>
        <dbReference type="EC" id="3.1.6.15"/>
    </reaction>
</comment>
<comment type="cofactor">
    <cofactor evidence="1">
        <name>Ca(2+)</name>
        <dbReference type="ChEBI" id="CHEBI:29108"/>
    </cofactor>
    <text evidence="1">Binds 1 Ca(2+) ion per subunit.</text>
</comment>
<comment type="subcellular location">
    <subcellularLocation>
        <location evidence="2">Lysosome</location>
    </subcellularLocation>
    <text evidence="2">The 63-kDa precursor protein localizes to pre-lysosomal compartments and tightly associates with organelle membranes, most likely the endoplasmic reticulum. In contrast, proteolytically processed fragments of 34-, 18- and 10-kDa are found in lysosomal fractions and lose their membrane association.</text>
</comment>
<comment type="PTM">
    <text evidence="2">N-glycosylated with both high mannose and complex type sugars.</text>
</comment>
<comment type="PTM">
    <text evidence="1">The conversion to 3-oxoalanine (also known as C-formylglycine, FGly), of a serine or cysteine residue in prokaryotes and of a cysteine residue in eukaryotes, is critical for catalytic activity.</text>
</comment>
<comment type="PTM">
    <text evidence="2">The 63-kDa precursor undergoes proteolytic processing in two steps, yielding two fragments in the first step (apparent molecular masses of 44 and 18 kDa) (By similarity). In the second step, the 44-kDa fragment is processed further to the 34- and 10-kDa chains. The 10-kDa chain is a cleavage product of the 44-kDa fragment but linked to the 18-kDa chain through a disulfide bridge (By similarity).</text>
</comment>
<comment type="similarity">
    <text evidence="5">Belongs to the sulfatase family.</text>
</comment>
<protein>
    <recommendedName>
        <fullName>Arylsulfatase G</fullName>
        <shortName>ASG</shortName>
        <ecNumber evidence="3">3.1.6.1</ecNumber>
    </recommendedName>
    <alternativeName>
        <fullName>N-sulfoglucosamine-3-sulfatase</fullName>
        <ecNumber evidence="3">3.1.6.15</ecNumber>
    </alternativeName>
</protein>
<reference key="1">
    <citation type="journal article" date="2005" name="Nature">
        <title>Genome sequence, comparative analysis and haplotype structure of the domestic dog.</title>
        <authorList>
            <person name="Lindblad-Toh K."/>
            <person name="Wade C.M."/>
            <person name="Mikkelsen T.S."/>
            <person name="Karlsson E.K."/>
            <person name="Jaffe D.B."/>
            <person name="Kamal M."/>
            <person name="Clamp M."/>
            <person name="Chang J.L."/>
            <person name="Kulbokas E.J. III"/>
            <person name="Zody M.C."/>
            <person name="Mauceli E."/>
            <person name="Xie X."/>
            <person name="Breen M."/>
            <person name="Wayne R.K."/>
            <person name="Ostrander E.A."/>
            <person name="Ponting C.P."/>
            <person name="Galibert F."/>
            <person name="Smith D.R."/>
            <person name="deJong P.J."/>
            <person name="Kirkness E.F."/>
            <person name="Alvarez P."/>
            <person name="Biagi T."/>
            <person name="Brockman W."/>
            <person name="Butler J."/>
            <person name="Chin C.-W."/>
            <person name="Cook A."/>
            <person name="Cuff J."/>
            <person name="Daly M.J."/>
            <person name="DeCaprio D."/>
            <person name="Gnerre S."/>
            <person name="Grabherr M."/>
            <person name="Kellis M."/>
            <person name="Kleber M."/>
            <person name="Bardeleben C."/>
            <person name="Goodstadt L."/>
            <person name="Heger A."/>
            <person name="Hitte C."/>
            <person name="Kim L."/>
            <person name="Koepfli K.-P."/>
            <person name="Parker H.G."/>
            <person name="Pollinger J.P."/>
            <person name="Searle S.M.J."/>
            <person name="Sutter N.B."/>
            <person name="Thomas R."/>
            <person name="Webber C."/>
            <person name="Baldwin J."/>
            <person name="Abebe A."/>
            <person name="Abouelleil A."/>
            <person name="Aftuck L."/>
            <person name="Ait-Zahra M."/>
            <person name="Aldredge T."/>
            <person name="Allen N."/>
            <person name="An P."/>
            <person name="Anderson S."/>
            <person name="Antoine C."/>
            <person name="Arachchi H."/>
            <person name="Aslam A."/>
            <person name="Ayotte L."/>
            <person name="Bachantsang P."/>
            <person name="Barry A."/>
            <person name="Bayul T."/>
            <person name="Benamara M."/>
            <person name="Berlin A."/>
            <person name="Bessette D."/>
            <person name="Blitshteyn B."/>
            <person name="Bloom T."/>
            <person name="Blye J."/>
            <person name="Boguslavskiy L."/>
            <person name="Bonnet C."/>
            <person name="Boukhgalter B."/>
            <person name="Brown A."/>
            <person name="Cahill P."/>
            <person name="Calixte N."/>
            <person name="Camarata J."/>
            <person name="Cheshatsang Y."/>
            <person name="Chu J."/>
            <person name="Citroen M."/>
            <person name="Collymore A."/>
            <person name="Cooke P."/>
            <person name="Dawoe T."/>
            <person name="Daza R."/>
            <person name="Decktor K."/>
            <person name="DeGray S."/>
            <person name="Dhargay N."/>
            <person name="Dooley K."/>
            <person name="Dooley K."/>
            <person name="Dorje P."/>
            <person name="Dorjee K."/>
            <person name="Dorris L."/>
            <person name="Duffey N."/>
            <person name="Dupes A."/>
            <person name="Egbiremolen O."/>
            <person name="Elong R."/>
            <person name="Falk J."/>
            <person name="Farina A."/>
            <person name="Faro S."/>
            <person name="Ferguson D."/>
            <person name="Ferreira P."/>
            <person name="Fisher S."/>
            <person name="FitzGerald M."/>
            <person name="Foley K."/>
            <person name="Foley C."/>
            <person name="Franke A."/>
            <person name="Friedrich D."/>
            <person name="Gage D."/>
            <person name="Garber M."/>
            <person name="Gearin G."/>
            <person name="Giannoukos G."/>
            <person name="Goode T."/>
            <person name="Goyette A."/>
            <person name="Graham J."/>
            <person name="Grandbois E."/>
            <person name="Gyaltsen K."/>
            <person name="Hafez N."/>
            <person name="Hagopian D."/>
            <person name="Hagos B."/>
            <person name="Hall J."/>
            <person name="Healy C."/>
            <person name="Hegarty R."/>
            <person name="Honan T."/>
            <person name="Horn A."/>
            <person name="Houde N."/>
            <person name="Hughes L."/>
            <person name="Hunnicutt L."/>
            <person name="Husby M."/>
            <person name="Jester B."/>
            <person name="Jones C."/>
            <person name="Kamat A."/>
            <person name="Kanga B."/>
            <person name="Kells C."/>
            <person name="Khazanovich D."/>
            <person name="Kieu A.C."/>
            <person name="Kisner P."/>
            <person name="Kumar M."/>
            <person name="Lance K."/>
            <person name="Landers T."/>
            <person name="Lara M."/>
            <person name="Lee W."/>
            <person name="Leger J.-P."/>
            <person name="Lennon N."/>
            <person name="Leuper L."/>
            <person name="LeVine S."/>
            <person name="Liu J."/>
            <person name="Liu X."/>
            <person name="Lokyitsang Y."/>
            <person name="Lokyitsang T."/>
            <person name="Lui A."/>
            <person name="Macdonald J."/>
            <person name="Major J."/>
            <person name="Marabella R."/>
            <person name="Maru K."/>
            <person name="Matthews C."/>
            <person name="McDonough S."/>
            <person name="Mehta T."/>
            <person name="Meldrim J."/>
            <person name="Melnikov A."/>
            <person name="Meneus L."/>
            <person name="Mihalev A."/>
            <person name="Mihova T."/>
            <person name="Miller K."/>
            <person name="Mittelman R."/>
            <person name="Mlenga V."/>
            <person name="Mulrain L."/>
            <person name="Munson G."/>
            <person name="Navidi A."/>
            <person name="Naylor J."/>
            <person name="Nguyen T."/>
            <person name="Nguyen N."/>
            <person name="Nguyen C."/>
            <person name="Nguyen T."/>
            <person name="Nicol R."/>
            <person name="Norbu N."/>
            <person name="Norbu C."/>
            <person name="Novod N."/>
            <person name="Nyima T."/>
            <person name="Olandt P."/>
            <person name="O'Neill B."/>
            <person name="O'Neill K."/>
            <person name="Osman S."/>
            <person name="Oyono L."/>
            <person name="Patti C."/>
            <person name="Perrin D."/>
            <person name="Phunkhang P."/>
            <person name="Pierre F."/>
            <person name="Priest M."/>
            <person name="Rachupka A."/>
            <person name="Raghuraman S."/>
            <person name="Rameau R."/>
            <person name="Ray V."/>
            <person name="Raymond C."/>
            <person name="Rege F."/>
            <person name="Rise C."/>
            <person name="Rogers J."/>
            <person name="Rogov P."/>
            <person name="Sahalie J."/>
            <person name="Settipalli S."/>
            <person name="Sharpe T."/>
            <person name="Shea T."/>
            <person name="Sheehan M."/>
            <person name="Sherpa N."/>
            <person name="Shi J."/>
            <person name="Shih D."/>
            <person name="Sloan J."/>
            <person name="Smith C."/>
            <person name="Sparrow T."/>
            <person name="Stalker J."/>
            <person name="Stange-Thomann N."/>
            <person name="Stavropoulos S."/>
            <person name="Stone C."/>
            <person name="Stone S."/>
            <person name="Sykes S."/>
            <person name="Tchuinga P."/>
            <person name="Tenzing P."/>
            <person name="Tesfaye S."/>
            <person name="Thoulutsang D."/>
            <person name="Thoulutsang Y."/>
            <person name="Topham K."/>
            <person name="Topping I."/>
            <person name="Tsamla T."/>
            <person name="Vassiliev H."/>
            <person name="Venkataraman V."/>
            <person name="Vo A."/>
            <person name="Wangchuk T."/>
            <person name="Wangdi T."/>
            <person name="Weiand M."/>
            <person name="Wilkinson J."/>
            <person name="Wilson A."/>
            <person name="Yadav S."/>
            <person name="Yang S."/>
            <person name="Yang X."/>
            <person name="Young G."/>
            <person name="Yu Q."/>
            <person name="Zainoun J."/>
            <person name="Zembek L."/>
            <person name="Zimmer A."/>
            <person name="Lander E.S."/>
        </authorList>
    </citation>
    <scope>NUCLEOTIDE SEQUENCE [LARGE SCALE GENOMIC DNA]</scope>
    <source>
        <strain>Boxer</strain>
    </source>
</reference>
<reference key="2">
    <citation type="journal article" date="2005" name="Hum. Mol. Genet.">
        <title>Sulfatases and sulfatase modifying factors: an exclusive and promiscuous relationship.</title>
        <authorList>
            <person name="Sardiello M."/>
            <person name="Annunziata I."/>
            <person name="Roma G."/>
            <person name="Ballabio A."/>
        </authorList>
    </citation>
    <scope>IDENTIFICATION</scope>
</reference>